<dbReference type="EMBL" id="AY340968">
    <property type="protein sequence ID" value="AAQ17075.1"/>
    <property type="molecule type" value="mRNA"/>
</dbReference>
<dbReference type="RefSeq" id="NP_001028072.1">
    <property type="nucleotide sequence ID" value="NM_001032900.1"/>
</dbReference>
<dbReference type="FunCoup" id="Q7YRC0">
    <property type="interactions" value="1725"/>
</dbReference>
<dbReference type="STRING" id="9544.ENSMMUP00000052865"/>
<dbReference type="PaxDb" id="9544-ENSMMUP00000020086"/>
<dbReference type="GeneID" id="574259"/>
<dbReference type="KEGG" id="mcc:574259"/>
<dbReference type="CTD" id="65991"/>
<dbReference type="eggNOG" id="KOG4099">
    <property type="taxonomic scope" value="Eukaryota"/>
</dbReference>
<dbReference type="InParanoid" id="Q7YRC0"/>
<dbReference type="OrthoDB" id="163794at2759"/>
<dbReference type="Proteomes" id="UP000006718">
    <property type="component" value="Unassembled WGS sequence"/>
</dbReference>
<dbReference type="GO" id="GO:0005741">
    <property type="term" value="C:mitochondrial outer membrane"/>
    <property type="evidence" value="ECO:0000318"/>
    <property type="project" value="GO_Central"/>
</dbReference>
<dbReference type="GO" id="GO:0005634">
    <property type="term" value="C:nucleus"/>
    <property type="evidence" value="ECO:0007669"/>
    <property type="project" value="UniProtKB-SubCell"/>
</dbReference>
<dbReference type="GO" id="GO:0005547">
    <property type="term" value="F:phosphatidylinositol-3,4,5-trisphosphate binding"/>
    <property type="evidence" value="ECO:0000250"/>
    <property type="project" value="UniProtKB"/>
</dbReference>
<dbReference type="GO" id="GO:0000422">
    <property type="term" value="P:autophagy of mitochondrion"/>
    <property type="evidence" value="ECO:0000318"/>
    <property type="project" value="GO_Central"/>
</dbReference>
<dbReference type="GO" id="GO:0035356">
    <property type="term" value="P:intracellular triglyceride homeostasis"/>
    <property type="evidence" value="ECO:0000250"/>
    <property type="project" value="UniProtKB"/>
</dbReference>
<dbReference type="GO" id="GO:0010543">
    <property type="term" value="P:regulation of platelet activation"/>
    <property type="evidence" value="ECO:0000250"/>
    <property type="project" value="UniProtKB"/>
</dbReference>
<dbReference type="InterPro" id="IPR007014">
    <property type="entry name" value="FUN14"/>
</dbReference>
<dbReference type="PANTHER" id="PTHR21346">
    <property type="entry name" value="FUN14 DOMAIN CONTAINING"/>
    <property type="match status" value="1"/>
</dbReference>
<dbReference type="PANTHER" id="PTHR21346:SF5">
    <property type="entry name" value="FUN14 DOMAIN-CONTAINING PROTEIN 2"/>
    <property type="match status" value="1"/>
</dbReference>
<dbReference type="Pfam" id="PF04930">
    <property type="entry name" value="FUN14"/>
    <property type="match status" value="1"/>
</dbReference>
<sequence length="189" mass="20678">METSAPRAGSQVVATTERHSAACRADPLRVSSRDKLTEMAASTQGNFDGNFESLDLAEFAKKQPWWRKLFGQESGPSAEKYSVATQLFIGGVTGWCTGFIFQNVGKLAATAVGGGFFLLQLANHTGYIKVDWQRVEKDMKKAKEQLKIRKSNQMPTEVRSKAEEVVSFVKKNVLVTGGFFGGFLLGMAS</sequence>
<protein>
    <recommendedName>
        <fullName evidence="1">FUN14 domain-containing protein 2</fullName>
    </recommendedName>
    <alternativeName>
        <fullName>Hepatitis C virus core-binding protein 6</fullName>
    </alternativeName>
</protein>
<accession>Q7YRC0</accession>
<reference key="1">
    <citation type="submission" date="2003-07" db="EMBL/GenBank/DDBJ databases">
        <title>Identification and sequence analysis of a monkey gene homologous to human hepatitis C virus core protein-binding protein 6.</title>
        <authorList>
            <person name="Cheng J."/>
            <person name="Li K."/>
            <person name="Wang L."/>
            <person name="Liu Y."/>
            <person name="Zhong Y."/>
            <person name="Li L."/>
        </authorList>
    </citation>
    <scope>NUCLEOTIDE SEQUENCE [MRNA]</scope>
</reference>
<gene>
    <name evidence="1" type="primary">FUNDC2</name>
    <name type="synonym">HCBP6</name>
</gene>
<keyword id="KW-0472">Membrane</keyword>
<keyword id="KW-0496">Mitochondrion</keyword>
<keyword id="KW-1000">Mitochondrion outer membrane</keyword>
<keyword id="KW-0539">Nucleus</keyword>
<keyword id="KW-0597">Phosphoprotein</keyword>
<keyword id="KW-1185">Reference proteome</keyword>
<keyword id="KW-0804">Transcription</keyword>
<keyword id="KW-0805">Transcription regulation</keyword>
<keyword id="KW-0812">Transmembrane</keyword>
<keyword id="KW-1133">Transmembrane helix</keyword>
<comment type="function">
    <text evidence="1 2">Binds directly and specifically 1,2-Diacyl-sn-glycero-3-phospho-(1'-myo-inositol-3',4',5'-bisphosphate) (PIP3) leading to the recruitment of PIP3 to mitochondria and may play a role in the regulation of the platelet activation via AKT/GSK3B/cGMP signaling pathways (By similarity). May act as transcription factor that regulates SREBP1 (isoform SREBP-1C) expression in order to modulate triglyceride (TG) homeostasis in hepatocytes (By similarity).</text>
</comment>
<comment type="subcellular location">
    <subcellularLocation>
        <location evidence="1">Mitochondrion outer membrane</location>
        <topology evidence="3">Multi-pass membrane protein</topology>
    </subcellularLocation>
    <subcellularLocation>
        <location evidence="1">Nucleus</location>
    </subcellularLocation>
</comment>
<comment type="similarity">
    <text evidence="4">Belongs to the FUN14 family.</text>
</comment>
<evidence type="ECO:0000250" key="1">
    <source>
        <dbReference type="UniProtKB" id="Q9BWH2"/>
    </source>
</evidence>
<evidence type="ECO:0000250" key="2">
    <source>
        <dbReference type="UniProtKB" id="Q9D6K8"/>
    </source>
</evidence>
<evidence type="ECO:0000255" key="3"/>
<evidence type="ECO:0000305" key="4"/>
<organism>
    <name type="scientific">Macaca mulatta</name>
    <name type="common">Rhesus macaque</name>
    <dbReference type="NCBI Taxonomy" id="9544"/>
    <lineage>
        <taxon>Eukaryota</taxon>
        <taxon>Metazoa</taxon>
        <taxon>Chordata</taxon>
        <taxon>Craniata</taxon>
        <taxon>Vertebrata</taxon>
        <taxon>Euteleostomi</taxon>
        <taxon>Mammalia</taxon>
        <taxon>Eutheria</taxon>
        <taxon>Euarchontoglires</taxon>
        <taxon>Primates</taxon>
        <taxon>Haplorrhini</taxon>
        <taxon>Catarrhini</taxon>
        <taxon>Cercopithecidae</taxon>
        <taxon>Cercopithecinae</taxon>
        <taxon>Macaca</taxon>
    </lineage>
</organism>
<proteinExistence type="evidence at transcript level"/>
<feature type="chain" id="PRO_0000314616" description="FUN14 domain-containing protein 2">
    <location>
        <begin position="1"/>
        <end position="189"/>
    </location>
</feature>
<feature type="topological domain" description="Cytoplasmic" evidence="1">
    <location>
        <begin position="1"/>
        <end position="80"/>
    </location>
</feature>
<feature type="transmembrane region" description="Helical" evidence="3">
    <location>
        <begin position="81"/>
        <end position="101"/>
    </location>
</feature>
<feature type="topological domain" description="Mitochondrial intermembrane" evidence="1">
    <location>
        <begin position="102"/>
        <end position="107"/>
    </location>
</feature>
<feature type="transmembrane region" description="Helical" evidence="3">
    <location>
        <begin position="108"/>
        <end position="128"/>
    </location>
</feature>
<feature type="topological domain" description="Cytoplasmic" evidence="1">
    <location>
        <begin position="129"/>
        <end position="164"/>
    </location>
</feature>
<feature type="transmembrane region" description="Helical" evidence="3">
    <location>
        <begin position="165"/>
        <end position="185"/>
    </location>
</feature>
<feature type="topological domain" description="Mitochondrial intermembrane" evidence="1">
    <location>
        <begin position="186"/>
        <end position="189"/>
    </location>
</feature>
<feature type="modified residue" description="Phosphoserine" evidence="1">
    <location>
        <position position="10"/>
    </location>
</feature>
<feature type="modified residue" description="Phosphoserine" evidence="1">
    <location>
        <position position="53"/>
    </location>
</feature>
<feature type="modified residue" description="Phosphoserine" evidence="1">
    <location>
        <position position="151"/>
    </location>
</feature>
<name>FUND2_MACMU</name>